<comment type="function">
    <text evidence="1 4">Transcription factor that regulates asexual reproduction (PubMed:19661696). Binds the StuA-response elements (StRE) with the consensus sequence 5'-(A/T)CGCG(T/A)N(A/C)-3' at the promoters of target genes (By similarity). Required for appressorium-mediated infection of rice leaves due to its involvement in the mobilization of lipids and glycogen (PubMed:19661696).</text>
</comment>
<comment type="subcellular location">
    <subcellularLocation>
        <location evidence="1">Nucleus</location>
    </subcellularLocation>
</comment>
<comment type="disruption phenotype">
    <text evidence="4">Leads to reduced conidiation and mycelial growth (PubMed:19661696). Delays the transfer of conidial glycogen and lipid droplets and decreases efficiency of appressorium-mediated invasion of rice leaves (PubMed:19661696).</text>
</comment>
<comment type="similarity">
    <text evidence="6">Belongs to the EFG1/PHD1/stuA family.</text>
</comment>
<gene>
    <name evidence="5" type="primary">STU1</name>
    <name type="ORF">MGG_00692</name>
</gene>
<feature type="chain" id="PRO_0000435978" description="Cell pattern formation-associated protein STU1">
    <location>
        <begin position="1"/>
        <end position="618"/>
    </location>
</feature>
<feature type="domain" description="HTH APSES-type" evidence="2">
    <location>
        <begin position="110"/>
        <end position="216"/>
    </location>
</feature>
<feature type="DNA-binding region" description="H-T-H motif" evidence="2">
    <location>
        <begin position="144"/>
        <end position="165"/>
    </location>
</feature>
<feature type="region of interest" description="Disordered" evidence="3">
    <location>
        <begin position="13"/>
        <end position="105"/>
    </location>
</feature>
<feature type="region of interest" description="Disordered" evidence="3">
    <location>
        <begin position="229"/>
        <end position="355"/>
    </location>
</feature>
<feature type="region of interest" description="Disordered" evidence="3">
    <location>
        <begin position="390"/>
        <end position="618"/>
    </location>
</feature>
<feature type="region of interest" description="Nuclear localization domain" evidence="1">
    <location>
        <begin position="566"/>
        <end position="588"/>
    </location>
</feature>
<feature type="compositionally biased region" description="Polar residues" evidence="3">
    <location>
        <begin position="13"/>
        <end position="28"/>
    </location>
</feature>
<feature type="compositionally biased region" description="Low complexity" evidence="3">
    <location>
        <begin position="48"/>
        <end position="59"/>
    </location>
</feature>
<feature type="compositionally biased region" description="Polar residues" evidence="3">
    <location>
        <begin position="91"/>
        <end position="101"/>
    </location>
</feature>
<feature type="compositionally biased region" description="Polar residues" evidence="3">
    <location>
        <begin position="256"/>
        <end position="266"/>
    </location>
</feature>
<feature type="compositionally biased region" description="Polar residues" evidence="3">
    <location>
        <begin position="284"/>
        <end position="298"/>
    </location>
</feature>
<feature type="compositionally biased region" description="Polar residues" evidence="3">
    <location>
        <begin position="305"/>
        <end position="326"/>
    </location>
</feature>
<feature type="compositionally biased region" description="Polar residues" evidence="3">
    <location>
        <begin position="336"/>
        <end position="355"/>
    </location>
</feature>
<feature type="compositionally biased region" description="Basic and acidic residues" evidence="3">
    <location>
        <begin position="438"/>
        <end position="451"/>
    </location>
</feature>
<feature type="compositionally biased region" description="Polar residues" evidence="3">
    <location>
        <begin position="452"/>
        <end position="476"/>
    </location>
</feature>
<feature type="compositionally biased region" description="Low complexity" evidence="3">
    <location>
        <begin position="494"/>
        <end position="512"/>
    </location>
</feature>
<feature type="compositionally biased region" description="Polar residues" evidence="3">
    <location>
        <begin position="513"/>
        <end position="563"/>
    </location>
</feature>
<dbReference type="EMBL" id="CM001235">
    <property type="protein sequence ID" value="EHA48731.1"/>
    <property type="molecule type" value="Genomic_DNA"/>
</dbReference>
<dbReference type="RefSeq" id="XP_003718315.1">
    <property type="nucleotide sequence ID" value="XM_003718267.1"/>
</dbReference>
<dbReference type="SMR" id="G4NF05"/>
<dbReference type="STRING" id="242507.G4NF05"/>
<dbReference type="EnsemblFungi" id="MGG_00692T0">
    <property type="protein sequence ID" value="MGG_00692T0"/>
    <property type="gene ID" value="MGG_00692"/>
</dbReference>
<dbReference type="GeneID" id="2675155"/>
<dbReference type="KEGG" id="mgr:MGG_00692"/>
<dbReference type="VEuPathDB" id="FungiDB:MGG_00692"/>
<dbReference type="eggNOG" id="ENOG502QW2C">
    <property type="taxonomic scope" value="Eukaryota"/>
</dbReference>
<dbReference type="HOGENOM" id="CLU_016460_0_0_1"/>
<dbReference type="InParanoid" id="G4NF05"/>
<dbReference type="OMA" id="HEAEYTH"/>
<dbReference type="OrthoDB" id="5407653at2759"/>
<dbReference type="PHI-base" id="PHI:2053"/>
<dbReference type="PHI-base" id="PHI:776"/>
<dbReference type="PHI-base" id="PHI:802"/>
<dbReference type="Proteomes" id="UP000009058">
    <property type="component" value="Chromosome 5"/>
</dbReference>
<dbReference type="GO" id="GO:0005634">
    <property type="term" value="C:nucleus"/>
    <property type="evidence" value="ECO:0007669"/>
    <property type="project" value="UniProtKB-SubCell"/>
</dbReference>
<dbReference type="GO" id="GO:0003700">
    <property type="term" value="F:DNA-binding transcription factor activity"/>
    <property type="evidence" value="ECO:0007669"/>
    <property type="project" value="TreeGrafter"/>
</dbReference>
<dbReference type="GO" id="GO:0043565">
    <property type="term" value="F:sequence-specific DNA binding"/>
    <property type="evidence" value="ECO:0007669"/>
    <property type="project" value="TreeGrafter"/>
</dbReference>
<dbReference type="GO" id="GO:0048315">
    <property type="term" value="P:conidium formation"/>
    <property type="evidence" value="ECO:0007669"/>
    <property type="project" value="UniProtKB-KW"/>
</dbReference>
<dbReference type="GO" id="GO:0045944">
    <property type="term" value="P:positive regulation of transcription by RNA polymerase II"/>
    <property type="evidence" value="ECO:0007669"/>
    <property type="project" value="TreeGrafter"/>
</dbReference>
<dbReference type="GO" id="GO:0030435">
    <property type="term" value="P:sporulation resulting in formation of a cellular spore"/>
    <property type="evidence" value="ECO:0007669"/>
    <property type="project" value="UniProtKB-KW"/>
</dbReference>
<dbReference type="FunFam" id="3.10.260.10:FF:000003">
    <property type="entry name" value="Ascospore maturation 1 protein"/>
    <property type="match status" value="1"/>
</dbReference>
<dbReference type="Gene3D" id="3.10.260.10">
    <property type="entry name" value="Transcription regulator HTH, APSES-type DNA-binding domain"/>
    <property type="match status" value="1"/>
</dbReference>
<dbReference type="InterPro" id="IPR029790">
    <property type="entry name" value="EFG1/Phd1/StuA"/>
</dbReference>
<dbReference type="InterPro" id="IPR036887">
    <property type="entry name" value="HTH_APSES_sf"/>
</dbReference>
<dbReference type="InterPro" id="IPR018004">
    <property type="entry name" value="KilA/APSES_HTH"/>
</dbReference>
<dbReference type="InterPro" id="IPR003163">
    <property type="entry name" value="Tscrpt_reg_HTH_APSES-type"/>
</dbReference>
<dbReference type="PANTHER" id="PTHR47792">
    <property type="entry name" value="PROTEIN SOK2-RELATED"/>
    <property type="match status" value="1"/>
</dbReference>
<dbReference type="PANTHER" id="PTHR47792:SF1">
    <property type="entry name" value="PROTEIN SOK2-RELATED"/>
    <property type="match status" value="1"/>
</dbReference>
<dbReference type="Pfam" id="PF04383">
    <property type="entry name" value="KilA-N"/>
    <property type="match status" value="1"/>
</dbReference>
<dbReference type="SMART" id="SM01252">
    <property type="entry name" value="KilA-N"/>
    <property type="match status" value="1"/>
</dbReference>
<dbReference type="SUPFAM" id="SSF54616">
    <property type="entry name" value="DNA-binding domain of Mlu1-box binding protein MBP1"/>
    <property type="match status" value="1"/>
</dbReference>
<dbReference type="PROSITE" id="PS51299">
    <property type="entry name" value="HTH_APSES"/>
    <property type="match status" value="1"/>
</dbReference>
<keyword id="KW-0183">Conidiation</keyword>
<keyword id="KW-0238">DNA-binding</keyword>
<keyword id="KW-0539">Nucleus</keyword>
<keyword id="KW-1185">Reference proteome</keyword>
<keyword id="KW-0749">Sporulation</keyword>
<keyword id="KW-0804">Transcription</keyword>
<keyword id="KW-0805">Transcription regulation</keyword>
<keyword id="KW-0843">Virulence</keyword>
<organism>
    <name type="scientific">Pyricularia oryzae (strain 70-15 / ATCC MYA-4617 / FGSC 8958)</name>
    <name type="common">Rice blast fungus</name>
    <name type="synonym">Magnaporthe oryzae</name>
    <dbReference type="NCBI Taxonomy" id="242507"/>
    <lineage>
        <taxon>Eukaryota</taxon>
        <taxon>Fungi</taxon>
        <taxon>Dikarya</taxon>
        <taxon>Ascomycota</taxon>
        <taxon>Pezizomycotina</taxon>
        <taxon>Sordariomycetes</taxon>
        <taxon>Sordariomycetidae</taxon>
        <taxon>Magnaporthales</taxon>
        <taxon>Pyriculariaceae</taxon>
        <taxon>Pyricularia</taxon>
    </lineage>
</organism>
<protein>
    <recommendedName>
        <fullName evidence="6">Cell pattern formation-associated protein STU1</fullName>
    </recommendedName>
    <alternativeName>
        <fullName evidence="1">Stunted protein A</fullName>
    </alternativeName>
</protein>
<name>STUA_PYRO7</name>
<sequence>MNQGHDMYYQQHMSAGPTQQPPTVTSYNPQPPIMQPSHGSYPAPPQPYGGYPYTNGMPSPQGPPVPGQMGPGSVLPSIAGHHGQAPGPVANQYSGFDTSGQIAPPGMKPRVTATLWEDEGSLCFQVEARGVCVARREDNHMINGTKLLNVAGMTRGRRDGILKSEKMRHVVKIGPMHLKGVWIPFERALDFANKEKITELLYPLFVHNISALLYHPANQNRNNQLMAAAERRKAETGGMRNPQGPPGLPALHHHSMSQNGSQSLSGNIGRPSLDRAHTFPTPPTSASSAVNMGSSDSFTWPPHQAMSNGQQNPMSIDTSLSNTRSMPTTPATTPPGSTLQSMQAYPPASQSYDGSRQLYNAPQLQQSPYQPTSTSPQDRSLYNQATYVKSEMGPPSARPMGSVLPGDHQNDQKPVNGLMHPPQGADQGHNNGVEDEADHEHDPEYTHDSRTYDNSQSQYNYTAPPVSSISSEQAHVSTDMPPGGQHGNSGRSTPRSAAAPQAYYQQAYSTSPRSATHQSTSNLYNVMSNDRGSTTNGSANGDVYSQSTDLSNGYATPVTNGNANLKRGRDDDDDRSSSSGQMDLKRRKTLMDNPISSPVYETMNRPAAAIAHPVSRRR</sequence>
<accession>G4NF05</accession>
<proteinExistence type="inferred from homology"/>
<reference key="1">
    <citation type="journal article" date="2005" name="Nature">
        <title>The genome sequence of the rice blast fungus Magnaporthe grisea.</title>
        <authorList>
            <person name="Dean R.A."/>
            <person name="Talbot N.J."/>
            <person name="Ebbole D.J."/>
            <person name="Farman M.L."/>
            <person name="Mitchell T.K."/>
            <person name="Orbach M.J."/>
            <person name="Thon M.R."/>
            <person name="Kulkarni R."/>
            <person name="Xu J.-R."/>
            <person name="Pan H."/>
            <person name="Read N.D."/>
            <person name="Lee Y.-H."/>
            <person name="Carbone I."/>
            <person name="Brown D."/>
            <person name="Oh Y.Y."/>
            <person name="Donofrio N."/>
            <person name="Jeong J.S."/>
            <person name="Soanes D.M."/>
            <person name="Djonovic S."/>
            <person name="Kolomiets E."/>
            <person name="Rehmeyer C."/>
            <person name="Li W."/>
            <person name="Harding M."/>
            <person name="Kim S."/>
            <person name="Lebrun M.-H."/>
            <person name="Bohnert H."/>
            <person name="Coughlan S."/>
            <person name="Butler J."/>
            <person name="Calvo S.E."/>
            <person name="Ma L.-J."/>
            <person name="Nicol R."/>
            <person name="Purcell S."/>
            <person name="Nusbaum C."/>
            <person name="Galagan J.E."/>
            <person name="Birren B.W."/>
        </authorList>
    </citation>
    <scope>NUCLEOTIDE SEQUENCE [LARGE SCALE GENOMIC DNA]</scope>
    <source>
        <strain>70-15 / ATCC MYA-4617 / FGSC 8958</strain>
    </source>
</reference>
<reference key="2">
    <citation type="submission" date="2011-05" db="EMBL/GenBank/DDBJ databases">
        <title>The genome sequence of Magnaporthe oryzae 70-15.</title>
        <authorList>
            <consortium name="The Broad Institute Genome Sequencing Platform"/>
            <person name="Ma L.-J."/>
            <person name="Dead R."/>
            <person name="Young S.K."/>
            <person name="Zeng Q."/>
            <person name="Gargeya S."/>
            <person name="Fitzgerald M."/>
            <person name="Haas B."/>
            <person name="Abouelleil A."/>
            <person name="Alvarado L."/>
            <person name="Arachchi H.M."/>
            <person name="Berlin A."/>
            <person name="Brown A."/>
            <person name="Chapman S.B."/>
            <person name="Chen Z."/>
            <person name="Dunbar C."/>
            <person name="Freedman E."/>
            <person name="Gearin G."/>
            <person name="Gellesch M."/>
            <person name="Goldberg J."/>
            <person name="Griggs A."/>
            <person name="Gujja S."/>
            <person name="Heiman D."/>
            <person name="Howarth C."/>
            <person name="Larson L."/>
            <person name="Lui A."/>
            <person name="MacDonald P.J.P."/>
            <person name="Mehta T."/>
            <person name="Montmayeur A."/>
            <person name="Murphy C."/>
            <person name="Neiman D."/>
            <person name="Pearson M."/>
            <person name="Priest M."/>
            <person name="Roberts A."/>
            <person name="Saif S."/>
            <person name="Shea T."/>
            <person name="Shenoy N."/>
            <person name="Sisk P."/>
            <person name="Stolte C."/>
            <person name="Sykes S."/>
            <person name="Yandava C."/>
            <person name="Wortman J."/>
            <person name="Nusbaum C."/>
            <person name="Birren B."/>
        </authorList>
    </citation>
    <scope>NUCLEOTIDE SEQUENCE [LARGE SCALE GENOMIC DNA]</scope>
    <source>
        <strain>70-15 / ATCC MYA-4617 / FGSC 8958</strain>
    </source>
</reference>
<reference key="3">
    <citation type="journal article" date="2009" name="Biosci. Biotechnol. Biochem.">
        <title>Mstu1, an APSES transcription factor, is required for appressorium-mediated infection in Magnaporthe grisea.</title>
        <authorList>
            <person name="Nishimura M."/>
            <person name="Fukada J."/>
            <person name="Moriwaki A."/>
            <person name="Fujikawa T."/>
            <person name="Ohashi M."/>
            <person name="Hibi T."/>
            <person name="Hayashi N."/>
        </authorList>
    </citation>
    <scope>FUNCTION</scope>
    <scope>DISRUPTION PHENOTYPE</scope>
</reference>
<evidence type="ECO:0000250" key="1">
    <source>
        <dbReference type="UniProtKB" id="P36011"/>
    </source>
</evidence>
<evidence type="ECO:0000255" key="2">
    <source>
        <dbReference type="PROSITE-ProRule" id="PRU00630"/>
    </source>
</evidence>
<evidence type="ECO:0000256" key="3">
    <source>
        <dbReference type="SAM" id="MobiDB-lite"/>
    </source>
</evidence>
<evidence type="ECO:0000269" key="4">
    <source>
    </source>
</evidence>
<evidence type="ECO:0000303" key="5">
    <source>
    </source>
</evidence>
<evidence type="ECO:0000305" key="6"/>